<gene>
    <name type="primary">ssb</name>
    <name type="ordered locus">RC1295</name>
</gene>
<reference key="1">
    <citation type="journal article" date="2001" name="Science">
        <title>Mechanisms of evolution in Rickettsia conorii and R. prowazekii.</title>
        <authorList>
            <person name="Ogata H."/>
            <person name="Audic S."/>
            <person name="Renesto-Audiffren P."/>
            <person name="Fournier P.-E."/>
            <person name="Barbe V."/>
            <person name="Samson D."/>
            <person name="Roux V."/>
            <person name="Cossart P."/>
            <person name="Weissenbach J."/>
            <person name="Claverie J.-M."/>
            <person name="Raoult D."/>
        </authorList>
    </citation>
    <scope>NUCLEOTIDE SEQUENCE [LARGE SCALE GENOMIC DNA]</scope>
    <source>
        <strain>ATCC VR-613 / Malish 7</strain>
    </source>
</reference>
<dbReference type="EMBL" id="AE006914">
    <property type="protein sequence ID" value="AAL03833.1"/>
    <property type="molecule type" value="Genomic_DNA"/>
</dbReference>
<dbReference type="PIR" id="G97861">
    <property type="entry name" value="G97861"/>
</dbReference>
<dbReference type="RefSeq" id="WP_010977855.1">
    <property type="nucleotide sequence ID" value="NC_003103.1"/>
</dbReference>
<dbReference type="SMR" id="Q92G30"/>
<dbReference type="GeneID" id="928445"/>
<dbReference type="KEGG" id="rco:RC1295"/>
<dbReference type="HOGENOM" id="CLU_078758_0_2_5"/>
<dbReference type="Proteomes" id="UP000000816">
    <property type="component" value="Chromosome"/>
</dbReference>
<dbReference type="GO" id="GO:0009295">
    <property type="term" value="C:nucleoid"/>
    <property type="evidence" value="ECO:0007669"/>
    <property type="project" value="TreeGrafter"/>
</dbReference>
<dbReference type="GO" id="GO:0003697">
    <property type="term" value="F:single-stranded DNA binding"/>
    <property type="evidence" value="ECO:0007669"/>
    <property type="project" value="UniProtKB-UniRule"/>
</dbReference>
<dbReference type="GO" id="GO:0006310">
    <property type="term" value="P:DNA recombination"/>
    <property type="evidence" value="ECO:0007669"/>
    <property type="project" value="UniProtKB-UniRule"/>
</dbReference>
<dbReference type="GO" id="GO:0006281">
    <property type="term" value="P:DNA repair"/>
    <property type="evidence" value="ECO:0007669"/>
    <property type="project" value="UniProtKB-UniRule"/>
</dbReference>
<dbReference type="GO" id="GO:0006260">
    <property type="term" value="P:DNA replication"/>
    <property type="evidence" value="ECO:0007669"/>
    <property type="project" value="UniProtKB-UniRule"/>
</dbReference>
<dbReference type="CDD" id="cd04496">
    <property type="entry name" value="SSB_OBF"/>
    <property type="match status" value="1"/>
</dbReference>
<dbReference type="Gene3D" id="2.40.50.140">
    <property type="entry name" value="Nucleic acid-binding proteins"/>
    <property type="match status" value="1"/>
</dbReference>
<dbReference type="HAMAP" id="MF_00984">
    <property type="entry name" value="SSB"/>
    <property type="match status" value="1"/>
</dbReference>
<dbReference type="InterPro" id="IPR012340">
    <property type="entry name" value="NA-bd_OB-fold"/>
</dbReference>
<dbReference type="InterPro" id="IPR000424">
    <property type="entry name" value="Primosome_PriB/ssb"/>
</dbReference>
<dbReference type="InterPro" id="IPR011344">
    <property type="entry name" value="ssDNA-bd"/>
</dbReference>
<dbReference type="NCBIfam" id="NF005170">
    <property type="entry name" value="PRK06642.1"/>
    <property type="match status" value="1"/>
</dbReference>
<dbReference type="NCBIfam" id="TIGR00621">
    <property type="entry name" value="ssb"/>
    <property type="match status" value="1"/>
</dbReference>
<dbReference type="PANTHER" id="PTHR10302">
    <property type="entry name" value="SINGLE-STRANDED DNA-BINDING PROTEIN"/>
    <property type="match status" value="1"/>
</dbReference>
<dbReference type="PANTHER" id="PTHR10302:SF27">
    <property type="entry name" value="SINGLE-STRANDED DNA-BINDING PROTEIN"/>
    <property type="match status" value="1"/>
</dbReference>
<dbReference type="Pfam" id="PF00436">
    <property type="entry name" value="SSB"/>
    <property type="match status" value="1"/>
</dbReference>
<dbReference type="PIRSF" id="PIRSF002070">
    <property type="entry name" value="SSB"/>
    <property type="match status" value="1"/>
</dbReference>
<dbReference type="SUPFAM" id="SSF50249">
    <property type="entry name" value="Nucleic acid-binding proteins"/>
    <property type="match status" value="1"/>
</dbReference>
<dbReference type="PROSITE" id="PS50935">
    <property type="entry name" value="SSB"/>
    <property type="match status" value="1"/>
</dbReference>
<sequence length="152" mass="17435">MAGSLNKVILIGNVGRDPEMRTTGEGKKIINLSLATTETWKDRITSERKERTEWHRVVIFSEGLVSVVERYVTKGSKLYIEGSLQTRKWNDNSGQEKYTTEVVLQNFNSQLILLDSKNSNNHNQDSGHSEYKHPETKNHSFDHSDLDDEIPF</sequence>
<proteinExistence type="inferred from homology"/>
<feature type="chain" id="PRO_0000096088" description="Single-stranded DNA-binding protein">
    <location>
        <begin position="1"/>
        <end position="152"/>
    </location>
</feature>
<feature type="domain" description="SSB" evidence="1">
    <location>
        <begin position="5"/>
        <end position="111"/>
    </location>
</feature>
<feature type="DNA-binding region" evidence="1">
    <location>
        <begin position="54"/>
        <end position="60"/>
    </location>
</feature>
<feature type="region of interest" description="Disordered" evidence="2">
    <location>
        <begin position="117"/>
        <end position="152"/>
    </location>
</feature>
<feature type="short sequence motif" description="Important for interaction with partner proteins" evidence="1">
    <location>
        <begin position="147"/>
        <end position="152"/>
    </location>
</feature>
<feature type="compositionally biased region" description="Basic and acidic residues" evidence="2">
    <location>
        <begin position="125"/>
        <end position="144"/>
    </location>
</feature>
<accession>Q92G30</accession>
<keyword id="KW-0227">DNA damage</keyword>
<keyword id="KW-0233">DNA recombination</keyword>
<keyword id="KW-0234">DNA repair</keyword>
<keyword id="KW-0235">DNA replication</keyword>
<keyword id="KW-0238">DNA-binding</keyword>
<protein>
    <recommendedName>
        <fullName evidence="1">Single-stranded DNA-binding protein</fullName>
        <shortName evidence="1">SSB</shortName>
    </recommendedName>
</protein>
<comment type="function">
    <text evidence="1">Plays an important role in DNA replication, recombination and repair. Binds to ssDNA and to an array of partner proteins to recruit them to their sites of action during DNA metabolism.</text>
</comment>
<comment type="subunit">
    <text evidence="1">Homotetramer.</text>
</comment>
<organism>
    <name type="scientific">Rickettsia conorii (strain ATCC VR-613 / Malish 7)</name>
    <dbReference type="NCBI Taxonomy" id="272944"/>
    <lineage>
        <taxon>Bacteria</taxon>
        <taxon>Pseudomonadati</taxon>
        <taxon>Pseudomonadota</taxon>
        <taxon>Alphaproteobacteria</taxon>
        <taxon>Rickettsiales</taxon>
        <taxon>Rickettsiaceae</taxon>
        <taxon>Rickettsieae</taxon>
        <taxon>Rickettsia</taxon>
        <taxon>spotted fever group</taxon>
    </lineage>
</organism>
<evidence type="ECO:0000255" key="1">
    <source>
        <dbReference type="HAMAP-Rule" id="MF_00984"/>
    </source>
</evidence>
<evidence type="ECO:0000256" key="2">
    <source>
        <dbReference type="SAM" id="MobiDB-lite"/>
    </source>
</evidence>
<name>SSB_RICCN</name>